<organism>
    <name type="scientific">Escherichia coli (strain K12 / MC4100 / BW2952)</name>
    <dbReference type="NCBI Taxonomy" id="595496"/>
    <lineage>
        <taxon>Bacteria</taxon>
        <taxon>Pseudomonadati</taxon>
        <taxon>Pseudomonadota</taxon>
        <taxon>Gammaproteobacteria</taxon>
        <taxon>Enterobacterales</taxon>
        <taxon>Enterobacteriaceae</taxon>
        <taxon>Escherichia</taxon>
    </lineage>
</organism>
<reference key="1">
    <citation type="journal article" date="2009" name="J. Bacteriol.">
        <title>Genomic sequencing reveals regulatory mutations and recombinational events in the widely used MC4100 lineage of Escherichia coli K-12.</title>
        <authorList>
            <person name="Ferenci T."/>
            <person name="Zhou Z."/>
            <person name="Betteridge T."/>
            <person name="Ren Y."/>
            <person name="Liu Y."/>
            <person name="Feng L."/>
            <person name="Reeves P.R."/>
            <person name="Wang L."/>
        </authorList>
    </citation>
    <scope>NUCLEOTIDE SEQUENCE [LARGE SCALE GENOMIC DNA]</scope>
    <source>
        <strain>K12 / MC4100 / BW2952</strain>
    </source>
</reference>
<dbReference type="EC" id="1.1.1.130" evidence="1"/>
<dbReference type="EMBL" id="CP001396">
    <property type="protein sequence ID" value="ACR61745.1"/>
    <property type="molecule type" value="Genomic_DNA"/>
</dbReference>
<dbReference type="SMR" id="C4ZXG6"/>
<dbReference type="KEGG" id="ebw:BWG_3265"/>
<dbReference type="HOGENOM" id="CLU_040452_4_0_6"/>
<dbReference type="GO" id="GO:0005737">
    <property type="term" value="C:cytoplasm"/>
    <property type="evidence" value="ECO:0007669"/>
    <property type="project" value="UniProtKB-SubCell"/>
</dbReference>
<dbReference type="GO" id="GO:0047559">
    <property type="term" value="F:3-dehydro-L-gulonate 2-dehydrogenase activity"/>
    <property type="evidence" value="ECO:0007669"/>
    <property type="project" value="UniProtKB-UniRule"/>
</dbReference>
<dbReference type="GO" id="GO:0070403">
    <property type="term" value="F:NAD+ binding"/>
    <property type="evidence" value="ECO:0007669"/>
    <property type="project" value="InterPro"/>
</dbReference>
<dbReference type="FunFam" id="1.10.1530.10:FF:000001">
    <property type="entry name" value="2,3-diketo-L-gulonate reductase"/>
    <property type="match status" value="1"/>
</dbReference>
<dbReference type="Gene3D" id="1.10.1530.10">
    <property type="match status" value="1"/>
</dbReference>
<dbReference type="Gene3D" id="3.30.1370.60">
    <property type="entry name" value="Hypothetical oxidoreductase yiak, domain 2"/>
    <property type="match status" value="1"/>
</dbReference>
<dbReference type="Gene3D" id="3.30.60.50">
    <property type="entry name" value="Hypothetical oxidoreductase yiak, domain 3"/>
    <property type="match status" value="1"/>
</dbReference>
<dbReference type="HAMAP" id="MF_00820">
    <property type="entry name" value="Diketo_gul_reduc"/>
    <property type="match status" value="1"/>
</dbReference>
<dbReference type="InterPro" id="IPR023689">
    <property type="entry name" value="Diketo_gul_Rdtase"/>
</dbReference>
<dbReference type="InterPro" id="IPR043144">
    <property type="entry name" value="Mal/L-sulf/L-lact_DH-like_ah"/>
</dbReference>
<dbReference type="InterPro" id="IPR043143">
    <property type="entry name" value="Mal/L-sulf/L-lact_DH-like_NADP"/>
</dbReference>
<dbReference type="InterPro" id="IPR036111">
    <property type="entry name" value="Mal/L-sulfo/L-lacto_DH-like_sf"/>
</dbReference>
<dbReference type="InterPro" id="IPR003767">
    <property type="entry name" value="Malate/L-lactate_DH-like"/>
</dbReference>
<dbReference type="NCBIfam" id="NF009750">
    <property type="entry name" value="PRK13260.1"/>
    <property type="match status" value="1"/>
</dbReference>
<dbReference type="PANTHER" id="PTHR11091:SF3">
    <property type="entry name" value="2,3-DIKETO-L-GULONATE REDUCTASE"/>
    <property type="match status" value="1"/>
</dbReference>
<dbReference type="PANTHER" id="PTHR11091">
    <property type="entry name" value="OXIDOREDUCTASE-RELATED"/>
    <property type="match status" value="1"/>
</dbReference>
<dbReference type="Pfam" id="PF02615">
    <property type="entry name" value="Ldh_2"/>
    <property type="match status" value="1"/>
</dbReference>
<dbReference type="SUPFAM" id="SSF89733">
    <property type="entry name" value="L-sulfolactate dehydrogenase-like"/>
    <property type="match status" value="1"/>
</dbReference>
<protein>
    <recommendedName>
        <fullName evidence="1">2,3-diketo-L-gulonate reductase</fullName>
        <shortName evidence="1">2,3-DKG reductase</shortName>
        <ecNumber evidence="1">1.1.1.130</ecNumber>
    </recommendedName>
    <alternativeName>
        <fullName evidence="1">3-dehydro-L-gulonate 2-dehydrogenase</fullName>
    </alternativeName>
</protein>
<comment type="function">
    <text evidence="1">Catalyzes the reduction of 2,3-diketo-L-gulonate in the presence of NADH, to form 3-keto-L-gulonate.</text>
</comment>
<comment type="catalytic activity">
    <reaction evidence="1">
        <text>3-dehydro-L-gulonate + NAD(+) = 2,3-dioxo-L-gulonate + NADH + H(+)</text>
        <dbReference type="Rhea" id="RHEA:21924"/>
        <dbReference type="ChEBI" id="CHEBI:15378"/>
        <dbReference type="ChEBI" id="CHEBI:57441"/>
        <dbReference type="ChEBI" id="CHEBI:57540"/>
        <dbReference type="ChEBI" id="CHEBI:57655"/>
        <dbReference type="ChEBI" id="CHEBI:57945"/>
        <dbReference type="EC" id="1.1.1.130"/>
    </reaction>
</comment>
<comment type="catalytic activity">
    <reaction evidence="1">
        <text>3-dehydro-L-gulonate + NADP(+) = 2,3-dioxo-L-gulonate + NADPH + H(+)</text>
        <dbReference type="Rhea" id="RHEA:21928"/>
        <dbReference type="ChEBI" id="CHEBI:15378"/>
        <dbReference type="ChEBI" id="CHEBI:57441"/>
        <dbReference type="ChEBI" id="CHEBI:57655"/>
        <dbReference type="ChEBI" id="CHEBI:57783"/>
        <dbReference type="ChEBI" id="CHEBI:58349"/>
        <dbReference type="EC" id="1.1.1.130"/>
    </reaction>
</comment>
<comment type="subunit">
    <text evidence="1">Homodimer.</text>
</comment>
<comment type="subcellular location">
    <subcellularLocation>
        <location evidence="1">Cytoplasm</location>
    </subcellularLocation>
</comment>
<comment type="similarity">
    <text evidence="1">Belongs to the LDH2/MDH2 oxidoreductase family. DlgD subfamily.</text>
</comment>
<evidence type="ECO:0000255" key="1">
    <source>
        <dbReference type="HAMAP-Rule" id="MF_00820"/>
    </source>
</evidence>
<accession>C4ZXG6</accession>
<proteinExistence type="inferred from homology"/>
<name>DLGD_ECOBW</name>
<gene>
    <name evidence="1" type="primary">dlgD</name>
    <name type="ordered locus">BWG_3265</name>
</gene>
<keyword id="KW-0963">Cytoplasm</keyword>
<keyword id="KW-0520">NAD</keyword>
<keyword id="KW-0560">Oxidoreductase</keyword>
<sequence length="332" mass="36573">MKVTFEQLKAAFNRVLISRGVDSETADACAEMFARTTESGVYSHGVNRFPRFIQQLENGDIIPDAQPKRITSLGAIEQWDAQRSIGNLTAKKMMDRAIELAADHGIGLVALRNANHWMRGGSYGWQAAEKGYIGICWTNSIAVMPPWGAKECRIGTNPLIVAIPSTPITMVDMSMSMFSYGMLEVNRLAGRQLPVDGGFDDEGNLTKEPGVIEKNRRILPMGYWKGSGMSIVLDMIATLLSDGASVAEVTQDNSDEYGISQIFIAIEVDKLIDGPTRDAKLQRIMDYVTSAERADENQAIRLPGHEFTTLLAENRRNGITVDDSVWAKIQAL</sequence>
<feature type="chain" id="PRO_1000213102" description="2,3-diketo-L-gulonate reductase">
    <location>
        <begin position="1"/>
        <end position="332"/>
    </location>
</feature>
<feature type="active site" description="Proton donor" evidence="1">
    <location>
        <position position="44"/>
    </location>
</feature>
<feature type="binding site" evidence="1">
    <location>
        <begin position="168"/>
        <end position="174"/>
    </location>
    <ligand>
        <name>NAD(+)</name>
        <dbReference type="ChEBI" id="CHEBI:57540"/>
    </ligand>
</feature>
<feature type="binding site" evidence="1">
    <location>
        <begin position="224"/>
        <end position="225"/>
    </location>
    <ligand>
        <name>NAD(+)</name>
        <dbReference type="ChEBI" id="CHEBI:57540"/>
    </ligand>
</feature>
<feature type="binding site" evidence="1">
    <location>
        <begin position="304"/>
        <end position="306"/>
    </location>
    <ligand>
        <name>NAD(+)</name>
        <dbReference type="ChEBI" id="CHEBI:57540"/>
    </ligand>
</feature>